<sequence>MKDVKRIDYFSYEELTILGGSKLPLVNFELFDPSNFEEAKAALIEKELVTENDKLTDAGFKVATLVREYISAIVNIRINDMYFAPFSYEKDEYILLSRFKNNGFQIRIINKDIAWWSIVQSYPLLMRQEKSNDWDFKQIDDETLENLNNESIDTIGRVLEIEIYNHQGDPQQSLYNIYEQNDLLFIRYPLKDKVLNVHIGVINTFIRELFGFDTDENHINKAEE</sequence>
<dbReference type="EMBL" id="CP000255">
    <property type="protein sequence ID" value="ABD21119.1"/>
    <property type="molecule type" value="Genomic_DNA"/>
</dbReference>
<dbReference type="RefSeq" id="WP_000655875.1">
    <property type="nucleotide sequence ID" value="NZ_CP027476.1"/>
</dbReference>
<dbReference type="KEGG" id="saa:SAUSA300_0286"/>
<dbReference type="HOGENOM" id="CLU_124476_0_0_9"/>
<dbReference type="OMA" id="FSYEKHE"/>
<dbReference type="Proteomes" id="UP000001939">
    <property type="component" value="Chromosome"/>
</dbReference>
<dbReference type="InterPro" id="IPR031682">
    <property type="entry name" value="EsaE"/>
</dbReference>
<dbReference type="Pfam" id="PF16887">
    <property type="entry name" value="DUF5081"/>
    <property type="match status" value="1"/>
</dbReference>
<feature type="chain" id="PRO_0000448087" description="Type VII secretion system protein EsaE">
    <location>
        <begin position="1"/>
        <end position="224"/>
    </location>
</feature>
<organism>
    <name type="scientific">Staphylococcus aureus (strain USA300)</name>
    <dbReference type="NCBI Taxonomy" id="367830"/>
    <lineage>
        <taxon>Bacteria</taxon>
        <taxon>Bacillati</taxon>
        <taxon>Bacillota</taxon>
        <taxon>Bacilli</taxon>
        <taxon>Bacillales</taxon>
        <taxon>Staphylococcaceae</taxon>
        <taxon>Staphylococcus</taxon>
    </lineage>
</organism>
<reference key="1">
    <citation type="journal article" date="2006" name="Lancet">
        <title>Complete genome sequence of USA300, an epidemic clone of community-acquired meticillin-resistant Staphylococcus aureus.</title>
        <authorList>
            <person name="Diep B.A."/>
            <person name="Gill S.R."/>
            <person name="Chang R.F."/>
            <person name="Phan T.H."/>
            <person name="Chen J.H."/>
            <person name="Davidson M.G."/>
            <person name="Lin F."/>
            <person name="Lin J."/>
            <person name="Carleton H.A."/>
            <person name="Mongodin E.F."/>
            <person name="Sensabaugh G.F."/>
            <person name="Perdreau-Remington F."/>
        </authorList>
    </citation>
    <scope>NUCLEOTIDE SEQUENCE [LARGE SCALE GENOMIC DNA]</scope>
    <source>
        <strain>USA300</strain>
    </source>
</reference>
<reference key="2">
    <citation type="journal article" date="2017" name="J. Bacteriol.">
        <title>EssE Promotes Staphylococcus aureus ESS-Dependent Protein Secretion To Modify Host Immune Responses during Infection.</title>
        <authorList>
            <person name="Anderson M."/>
            <person name="Ohr R.J."/>
            <person name="Aly K.A."/>
            <person name="Nocadello S."/>
            <person name="Kim H.K."/>
            <person name="Schneewind C.E."/>
            <person name="Schneewind O."/>
            <person name="Missiakas D."/>
        </authorList>
    </citation>
    <scope>FUNCTION</scope>
    <scope>INTERACTION WITH ESSD</scope>
    <scope>DISRUPTION PHENOTYPE</scope>
</reference>
<name>ESSE_STAA3</name>
<keyword id="KW-0843">Virulence</keyword>
<proteinExistence type="evidence at protein level"/>
<comment type="function">
    <text evidence="1">Component of the type VII secretion system (Ess). Plays a role in Esx protein secretion. Plays an essential role in the processing and secretion of EssD.</text>
</comment>
<comment type="subunit">
    <text evidence="1">Interacts with EssD.</text>
</comment>
<comment type="disruption phenotype">
    <text evidence="1">Deletion affects Esx protein secretion and the production of cytokines during bloodstream infection and also impacts the ability of staphylococci to establish infectious lesions and to manipulate cellular immune responses of the host.</text>
</comment>
<gene>
    <name type="ordered locus">SAUSA300_0286</name>
</gene>
<accession>A0A0H2XFI6</accession>
<protein>
    <recommendedName>
        <fullName>Type VII secretion system protein EsaE</fullName>
    </recommendedName>
</protein>
<evidence type="ECO:0000269" key="1">
    <source>
    </source>
</evidence>